<organism>
    <name type="scientific">Phytophthora infestans (strain T30-4)</name>
    <name type="common">Potato late blight agent</name>
    <dbReference type="NCBI Taxonomy" id="403677"/>
    <lineage>
        <taxon>Eukaryota</taxon>
        <taxon>Sar</taxon>
        <taxon>Stramenopiles</taxon>
        <taxon>Oomycota</taxon>
        <taxon>Peronosporales</taxon>
        <taxon>Peronosporaceae</taxon>
        <taxon>Phytophthora</taxon>
    </lineage>
</organism>
<comment type="function">
    <text evidence="5 6">Effector that is involved in host plant infection. Contributes to virulence during the early infection stage, by inhibiting plant defense responses induced by both PAMP-triggered immunity (PTI) and effector-triggered immunity (ETI).</text>
</comment>
<comment type="subcellular location">
    <subcellularLocation>
        <location evidence="6">Secreted</location>
    </subcellularLocation>
    <subcellularLocation>
        <location evidence="6">Host cell membrane</location>
    </subcellularLocation>
    <subcellularLocation>
        <location evidence="6">Host nucleus</location>
        <location evidence="6">Host nucleolus</location>
    </subcellularLocation>
</comment>
<comment type="induction">
    <text evidence="2 3 4 5">Expression is induced during host plant infection.</text>
</comment>
<comment type="domain">
    <text evidence="10">The RxLR-dEER motif acts to carry the protein into the host cell cytoplasm through binding to cell surface phosphatidylinositol-3-phosphate.</text>
</comment>
<comment type="similarity">
    <text evidence="9">Belongs to the RxLR effector family.</text>
</comment>
<gene>
    <name evidence="7" type="primary">PexRD44</name>
    <name evidence="8" type="synonym">CRE14</name>
    <name type="ORF">PITG_17063</name>
</gene>
<keyword id="KW-1032">Host cell membrane</keyword>
<keyword id="KW-1043">Host membrane</keyword>
<keyword id="KW-1048">Host nucleus</keyword>
<keyword id="KW-0472">Membrane</keyword>
<keyword id="KW-1185">Reference proteome</keyword>
<keyword id="KW-0964">Secreted</keyword>
<keyword id="KW-0732">Signal</keyword>
<keyword id="KW-0843">Virulence</keyword>
<accession>D0NUQ3</accession>
<sequence length="160" mass="18352">MRLLLWVLISMLSIALSSCAAASADSNERLVRAVYSTVRSRDLATDDGPKHTKRFLRGESSKIVNLKQEEGVFEERKGVSQKLTKALQAIKARYLKWEQKVLVPGFKKMAEKGVTYSELRDTFRVRMMNSGRWGTPSGFKRYARLYSEWLHRTGRSHLAK</sequence>
<reference key="1">
    <citation type="journal article" date="2009" name="Nature">
        <title>Genome sequence and analysis of the Irish potato famine pathogen Phytophthora infestans.</title>
        <authorList>
            <consortium name="The Broad Institute Genome Sequencing Platform"/>
            <person name="Haas B.J."/>
            <person name="Kamoun S."/>
            <person name="Zody M.C."/>
            <person name="Jiang R.H."/>
            <person name="Handsaker R.E."/>
            <person name="Cano L.M."/>
            <person name="Grabherr M."/>
            <person name="Kodira C.D."/>
            <person name="Raffaele S."/>
            <person name="Torto-Alalibo T."/>
            <person name="Bozkurt T.O."/>
            <person name="Ah-Fong A.M."/>
            <person name="Alvarado L."/>
            <person name="Anderson V.L."/>
            <person name="Armstrong M.R."/>
            <person name="Avrova A."/>
            <person name="Baxter L."/>
            <person name="Beynon J."/>
            <person name="Boevink P.C."/>
            <person name="Bollmann S.R."/>
            <person name="Bos J.I."/>
            <person name="Bulone V."/>
            <person name="Cai G."/>
            <person name="Cakir C."/>
            <person name="Carrington J.C."/>
            <person name="Chawner M."/>
            <person name="Conti L."/>
            <person name="Costanzo S."/>
            <person name="Ewan R."/>
            <person name="Fahlgren N."/>
            <person name="Fischbach M.A."/>
            <person name="Fugelstad J."/>
            <person name="Gilroy E.M."/>
            <person name="Gnerre S."/>
            <person name="Green P.J."/>
            <person name="Grenville-Briggs L.J."/>
            <person name="Griffith J."/>
            <person name="Grunwald N.J."/>
            <person name="Horn K."/>
            <person name="Horner N.R."/>
            <person name="Hu C.H."/>
            <person name="Huitema E."/>
            <person name="Jeong D.H."/>
            <person name="Jones A.M."/>
            <person name="Jones J.D."/>
            <person name="Jones R.W."/>
            <person name="Karlsson E.K."/>
            <person name="Kunjeti S.G."/>
            <person name="Lamour K."/>
            <person name="Liu Z."/>
            <person name="Ma L."/>
            <person name="Maclean D."/>
            <person name="Chibucos M.C."/>
            <person name="McDonald H."/>
            <person name="McWalters J."/>
            <person name="Meijer H.J."/>
            <person name="Morgan W."/>
            <person name="Morris P.F."/>
            <person name="Munro C.A."/>
            <person name="O'Neill K."/>
            <person name="Ospina-Giraldo M."/>
            <person name="Pinzon A."/>
            <person name="Pritchard L."/>
            <person name="Ramsahoye B."/>
            <person name="Ren Q."/>
            <person name="Restrepo S."/>
            <person name="Roy S."/>
            <person name="Sadanandom A."/>
            <person name="Savidor A."/>
            <person name="Schornack S."/>
            <person name="Schwartz D.C."/>
            <person name="Schumann U.D."/>
            <person name="Schwessinger B."/>
            <person name="Seyer L."/>
            <person name="Sharpe T."/>
            <person name="Silvar C."/>
            <person name="Song J."/>
            <person name="Studholme D.J."/>
            <person name="Sykes S."/>
            <person name="Thines M."/>
            <person name="van de Vondervoort P.J."/>
            <person name="Phuntumart V."/>
            <person name="Wawra S."/>
            <person name="Weide R."/>
            <person name="Win J."/>
            <person name="Young C."/>
            <person name="Zhou S."/>
            <person name="Fry W."/>
            <person name="Meyers B.C."/>
            <person name="van West P."/>
            <person name="Ristaino J."/>
            <person name="Govers F."/>
            <person name="Birch P.R."/>
            <person name="Whisson S.C."/>
            <person name="Judelson H.S."/>
            <person name="Nusbaum C."/>
        </authorList>
    </citation>
    <scope>NUCLEOTIDE SEQUENCE [LARGE SCALE GENOMIC DNA]</scope>
    <scope>INDUCTION</scope>
    <source>
        <strain>T30-4</strain>
    </source>
</reference>
<reference key="2">
    <citation type="journal article" date="2009" name="Plant Cell">
        <title>In planta expression screens of Phytophthora infestans RXLR effectors reveal diverse phenotypes, including activation of the Solanum bulbocastanum disease resistance protein Rpi-blb2.</title>
        <authorList>
            <person name="Oh S.K."/>
            <person name="Young C."/>
            <person name="Lee M."/>
            <person name="Oliva R."/>
            <person name="Bozkurt T.O."/>
            <person name="Cano L.M."/>
            <person name="Win J."/>
            <person name="Bos J.I."/>
            <person name="Liu H.Y."/>
            <person name="van Damme M."/>
            <person name="Morgan W."/>
            <person name="Choi D."/>
            <person name="Van der Vossen E.A."/>
            <person name="Vleeshouwers V.G."/>
            <person name="Kamoun S."/>
        </authorList>
    </citation>
    <scope>INDUCTION</scope>
</reference>
<reference key="3">
    <citation type="journal article" date="2017" name="BMC Genomics">
        <title>RNA-seq of life stages of the oomycete Phytophthora infestans reveals dynamic changes in metabolic, signal transduction, and pathogenesis genes and a major role for calcium signaling in development.</title>
        <authorList>
            <person name="Ah-Fong A.M."/>
            <person name="Kim K.S."/>
            <person name="Judelson H.S."/>
        </authorList>
    </citation>
    <scope>INDUCTION</scope>
</reference>
<reference key="4">
    <citation type="journal article" date="2017" name="Front. Plant Sci.">
        <title>Conserved RXLR effector genes of Phytophthora infestans expressed at the early stage of potato infection are suppressive to host defense.</title>
        <authorList>
            <person name="Yin J."/>
            <person name="Gu B."/>
            <person name="Huang G."/>
            <person name="Tian Y."/>
            <person name="Quan J."/>
            <person name="Lindqvist-Kreuze H."/>
            <person name="Shan W."/>
        </authorList>
    </citation>
    <scope>INDUCTION</scope>
    <scope>FUNCTION</scope>
    <scope>DOMAIN</scope>
</reference>
<reference key="5">
    <citation type="journal article" date="2019" name="J. Exp. Bot.">
        <title>Phytophthora infestans RXLR effectors act in concert at diverse subcellular locations to enhance host colonization.</title>
        <authorList>
            <person name="Wang S."/>
            <person name="McLellan H."/>
            <person name="Bukharova T."/>
            <person name="He Q."/>
            <person name="Murphy F."/>
            <person name="Shi J."/>
            <person name="Sun S."/>
            <person name="van Weymers P."/>
            <person name="Ren Y."/>
            <person name="Thilliez G."/>
            <person name="Wang H."/>
            <person name="Chen X."/>
            <person name="Engelhardt S."/>
            <person name="Vleeshouwers V."/>
            <person name="Gilroy E.M."/>
            <person name="Whisson S.C."/>
            <person name="Hein I."/>
            <person name="Wang X."/>
            <person name="Tian Z."/>
            <person name="Birch P.R.J."/>
            <person name="Boevink P.C."/>
        </authorList>
    </citation>
    <scope>SUBCELLULAR LOCATION</scope>
    <scope>FUNCTION</scope>
</reference>
<name>RD44_PHYIT</name>
<protein>
    <recommendedName>
        <fullName evidence="7">RxLR effector protein PexRD44</fullName>
    </recommendedName>
    <alternativeName>
        <fullName evidence="8">Core RXLR effector 14</fullName>
    </alternativeName>
</protein>
<proteinExistence type="evidence at transcript level"/>
<dbReference type="EMBL" id="DS028164">
    <property type="protein sequence ID" value="EEY65399.1"/>
    <property type="molecule type" value="Genomic_DNA"/>
</dbReference>
<dbReference type="RefSeq" id="XP_002897262.1">
    <property type="nucleotide sequence ID" value="XM_002897216.1"/>
</dbReference>
<dbReference type="SMR" id="D0NUQ3"/>
<dbReference type="STRING" id="403677.D0NUQ3"/>
<dbReference type="EnsemblProtists" id="PITG_17063T0">
    <property type="protein sequence ID" value="PITG_17063T0"/>
    <property type="gene ID" value="PITG_17063"/>
</dbReference>
<dbReference type="GeneID" id="9469386"/>
<dbReference type="KEGG" id="pif:PITG_17063"/>
<dbReference type="VEuPathDB" id="FungiDB:PITG_17063"/>
<dbReference type="eggNOG" id="ENOG502RFF9">
    <property type="taxonomic scope" value="Eukaryota"/>
</dbReference>
<dbReference type="HOGENOM" id="CLU_1558292_0_0_1"/>
<dbReference type="InParanoid" id="D0NUQ3"/>
<dbReference type="OMA" id="RYLKWEQ"/>
<dbReference type="OrthoDB" id="102701at2759"/>
<dbReference type="Proteomes" id="UP000006643">
    <property type="component" value="Partially assembled WGS sequence"/>
</dbReference>
<dbReference type="GO" id="GO:0005576">
    <property type="term" value="C:extracellular region"/>
    <property type="evidence" value="ECO:0007669"/>
    <property type="project" value="UniProtKB-SubCell"/>
</dbReference>
<dbReference type="GO" id="GO:0044196">
    <property type="term" value="C:host cell nucleolus"/>
    <property type="evidence" value="ECO:0007669"/>
    <property type="project" value="UniProtKB-SubCell"/>
</dbReference>
<dbReference type="GO" id="GO:0020002">
    <property type="term" value="C:host cell plasma membrane"/>
    <property type="evidence" value="ECO:0007669"/>
    <property type="project" value="UniProtKB-SubCell"/>
</dbReference>
<dbReference type="GO" id="GO:0016020">
    <property type="term" value="C:membrane"/>
    <property type="evidence" value="ECO:0007669"/>
    <property type="project" value="UniProtKB-KW"/>
</dbReference>
<dbReference type="InterPro" id="IPR031825">
    <property type="entry name" value="RXLR"/>
</dbReference>
<dbReference type="Pfam" id="PF16810">
    <property type="entry name" value="RXLR"/>
    <property type="match status" value="1"/>
</dbReference>
<feature type="signal peptide" evidence="1">
    <location>
        <begin position="1"/>
        <end position="21"/>
    </location>
</feature>
<feature type="chain" id="PRO_5003013676" description="RxLR effector protein PexRD44">
    <location>
        <begin position="22"/>
        <end position="160"/>
    </location>
</feature>
<feature type="short sequence motif" description="RxLR-dEER" evidence="10">
    <location>
        <begin position="54"/>
        <end position="76"/>
    </location>
</feature>
<evidence type="ECO:0000255" key="1"/>
<evidence type="ECO:0000269" key="2">
    <source>
    </source>
</evidence>
<evidence type="ECO:0000269" key="3">
    <source>
    </source>
</evidence>
<evidence type="ECO:0000269" key="4">
    <source>
    </source>
</evidence>
<evidence type="ECO:0000269" key="5">
    <source>
    </source>
</evidence>
<evidence type="ECO:0000269" key="6">
    <source>
    </source>
</evidence>
<evidence type="ECO:0000303" key="7">
    <source>
    </source>
</evidence>
<evidence type="ECO:0000303" key="8">
    <source>
    </source>
</evidence>
<evidence type="ECO:0000305" key="9"/>
<evidence type="ECO:0000305" key="10">
    <source>
    </source>
</evidence>